<reference key="1">
    <citation type="journal article" date="2000" name="Nature">
        <title>Sequence and analysis of chromosome 1 of the plant Arabidopsis thaliana.</title>
        <authorList>
            <person name="Theologis A."/>
            <person name="Ecker J.R."/>
            <person name="Palm C.J."/>
            <person name="Federspiel N.A."/>
            <person name="Kaul S."/>
            <person name="White O."/>
            <person name="Alonso J."/>
            <person name="Altafi H."/>
            <person name="Araujo R."/>
            <person name="Bowman C.L."/>
            <person name="Brooks S.Y."/>
            <person name="Buehler E."/>
            <person name="Chan A."/>
            <person name="Chao Q."/>
            <person name="Chen H."/>
            <person name="Cheuk R.F."/>
            <person name="Chin C.W."/>
            <person name="Chung M.K."/>
            <person name="Conn L."/>
            <person name="Conway A.B."/>
            <person name="Conway A.R."/>
            <person name="Creasy T.H."/>
            <person name="Dewar K."/>
            <person name="Dunn P."/>
            <person name="Etgu P."/>
            <person name="Feldblyum T.V."/>
            <person name="Feng J.-D."/>
            <person name="Fong B."/>
            <person name="Fujii C.Y."/>
            <person name="Gill J.E."/>
            <person name="Goldsmith A.D."/>
            <person name="Haas B."/>
            <person name="Hansen N.F."/>
            <person name="Hughes B."/>
            <person name="Huizar L."/>
            <person name="Hunter J.L."/>
            <person name="Jenkins J."/>
            <person name="Johnson-Hopson C."/>
            <person name="Khan S."/>
            <person name="Khaykin E."/>
            <person name="Kim C.J."/>
            <person name="Koo H.L."/>
            <person name="Kremenetskaia I."/>
            <person name="Kurtz D.B."/>
            <person name="Kwan A."/>
            <person name="Lam B."/>
            <person name="Langin-Hooper S."/>
            <person name="Lee A."/>
            <person name="Lee J.M."/>
            <person name="Lenz C.A."/>
            <person name="Li J.H."/>
            <person name="Li Y.-P."/>
            <person name="Lin X."/>
            <person name="Liu S.X."/>
            <person name="Liu Z.A."/>
            <person name="Luros J.S."/>
            <person name="Maiti R."/>
            <person name="Marziali A."/>
            <person name="Militscher J."/>
            <person name="Miranda M."/>
            <person name="Nguyen M."/>
            <person name="Nierman W.C."/>
            <person name="Osborne B.I."/>
            <person name="Pai G."/>
            <person name="Peterson J."/>
            <person name="Pham P.K."/>
            <person name="Rizzo M."/>
            <person name="Rooney T."/>
            <person name="Rowley D."/>
            <person name="Sakano H."/>
            <person name="Salzberg S.L."/>
            <person name="Schwartz J.R."/>
            <person name="Shinn P."/>
            <person name="Southwick A.M."/>
            <person name="Sun H."/>
            <person name="Tallon L.J."/>
            <person name="Tambunga G."/>
            <person name="Toriumi M.J."/>
            <person name="Town C.D."/>
            <person name="Utterback T."/>
            <person name="Van Aken S."/>
            <person name="Vaysberg M."/>
            <person name="Vysotskaia V.S."/>
            <person name="Walker M."/>
            <person name="Wu D."/>
            <person name="Yu G."/>
            <person name="Fraser C.M."/>
            <person name="Venter J.C."/>
            <person name="Davis R.W."/>
        </authorList>
    </citation>
    <scope>NUCLEOTIDE SEQUENCE [LARGE SCALE GENOMIC DNA]</scope>
    <source>
        <strain>cv. Columbia</strain>
    </source>
</reference>
<reference key="2">
    <citation type="journal article" date="2017" name="Plant J.">
        <title>Araport11: a complete reannotation of the Arabidopsis thaliana reference genome.</title>
        <authorList>
            <person name="Cheng C.Y."/>
            <person name="Krishnakumar V."/>
            <person name="Chan A.P."/>
            <person name="Thibaud-Nissen F."/>
            <person name="Schobel S."/>
            <person name="Town C.D."/>
        </authorList>
    </citation>
    <scope>GENOME REANNOTATION</scope>
    <source>
        <strain>cv. Columbia</strain>
    </source>
</reference>
<reference key="3">
    <citation type="submission" date="2004-03" db="EMBL/GenBank/DDBJ databases">
        <title>Arabidopsis ORF clones.</title>
        <authorList>
            <person name="Cheuk R."/>
            <person name="Chen H."/>
            <person name="Kim C.J."/>
            <person name="Shinn P."/>
            <person name="Ecker J.R."/>
        </authorList>
    </citation>
    <scope>NUCLEOTIDE SEQUENCE [LARGE SCALE MRNA]</scope>
    <source>
        <strain>cv. Columbia</strain>
    </source>
</reference>
<gene>
    <name type="ordered locus">At1g31060</name>
    <name type="ORF">F17F8.2</name>
</gene>
<sequence>MLREECTPSSSWWEDVQHHHNDHANSISSTSFYHKSSNNNSHANASCEEDNLSVSTVRASNRLDLTAESSNHHSLSASNQPASSSDELLRDHVVSSHNHLWSLAFL</sequence>
<proteinExistence type="predicted"/>
<dbReference type="EMBL" id="AC000107">
    <property type="protein sequence ID" value="AAF98178.1"/>
    <property type="status" value="ALT_SEQ"/>
    <property type="molecule type" value="Genomic_DNA"/>
</dbReference>
<dbReference type="EMBL" id="CP002684">
    <property type="protein sequence ID" value="AEE31309.1"/>
    <property type="status" value="ALT_SEQ"/>
    <property type="molecule type" value="Genomic_DNA"/>
</dbReference>
<dbReference type="EMBL" id="BT011591">
    <property type="protein sequence ID" value="AAS47597.1"/>
    <property type="molecule type" value="mRNA"/>
</dbReference>
<dbReference type="EMBL" id="BT012233">
    <property type="protein sequence ID" value="AAS76720.1"/>
    <property type="molecule type" value="mRNA"/>
</dbReference>
<dbReference type="RefSeq" id="NP_174391.5">
    <property type="nucleotide sequence ID" value="NM_102843.7"/>
</dbReference>
<dbReference type="BioGRID" id="25226">
    <property type="interactions" value="8"/>
</dbReference>
<dbReference type="STRING" id="3702.Q6NLU6"/>
<dbReference type="PeptideAtlas" id="Q6NLU6"/>
<dbReference type="KEGG" id="ath:AT1G31050"/>
<dbReference type="Araport" id="AT1G31060"/>
<dbReference type="TAIR" id="AT1G31060"/>
<dbReference type="HOGENOM" id="CLU_043465_1_0_1"/>
<dbReference type="InParanoid" id="Q6NLU6"/>
<dbReference type="OrthoDB" id="663846at2759"/>
<dbReference type="PRO" id="PR:Q6NLU6"/>
<dbReference type="Proteomes" id="UP000006548">
    <property type="component" value="Chromosome 1"/>
</dbReference>
<dbReference type="ExpressionAtlas" id="Q6NLU6">
    <property type="expression patterns" value="baseline and differential"/>
</dbReference>
<organism>
    <name type="scientific">Arabidopsis thaliana</name>
    <name type="common">Mouse-ear cress</name>
    <dbReference type="NCBI Taxonomy" id="3702"/>
    <lineage>
        <taxon>Eukaryota</taxon>
        <taxon>Viridiplantae</taxon>
        <taxon>Streptophyta</taxon>
        <taxon>Embryophyta</taxon>
        <taxon>Tracheophyta</taxon>
        <taxon>Spermatophyta</taxon>
        <taxon>Magnoliopsida</taxon>
        <taxon>eudicotyledons</taxon>
        <taxon>Gunneridae</taxon>
        <taxon>Pentapetalae</taxon>
        <taxon>rosids</taxon>
        <taxon>malvids</taxon>
        <taxon>Brassicales</taxon>
        <taxon>Brassicaceae</taxon>
        <taxon>Camelineae</taxon>
        <taxon>Arabidopsis</taxon>
    </lineage>
</organism>
<evidence type="ECO:0000256" key="1">
    <source>
        <dbReference type="SAM" id="MobiDB-lite"/>
    </source>
</evidence>
<evidence type="ECO:0000305" key="2"/>
<protein>
    <recommendedName>
        <fullName>Uncharacterized protein At1g31060</fullName>
    </recommendedName>
</protein>
<comment type="sequence caution" evidence="2">
    <conflict type="erroneous gene model prediction">
        <sequence resource="EMBL-CDS" id="AAF98178"/>
    </conflict>
</comment>
<comment type="sequence caution" evidence="2">
    <conflict type="erroneous gene model prediction">
        <sequence resource="EMBL-CDS" id="AEE31309"/>
    </conflict>
    <text>The predicted gene has been split into 2 genes: At1g31050 and At1g31060.</text>
</comment>
<accession>Q6NLU6</accession>
<accession>F4I7V0</accession>
<accession>Q9FYJ7</accession>
<keyword id="KW-1185">Reference proteome</keyword>
<name>Y1106_ARATH</name>
<feature type="chain" id="PRO_0000416256" description="Uncharacterized protein At1g31060">
    <location>
        <begin position="1"/>
        <end position="106"/>
    </location>
</feature>
<feature type="region of interest" description="Disordered" evidence="1">
    <location>
        <begin position="24"/>
        <end position="49"/>
    </location>
</feature>
<feature type="region of interest" description="Disordered" evidence="1">
    <location>
        <begin position="65"/>
        <end position="87"/>
    </location>
</feature>
<feature type="compositionally biased region" description="Polar residues" evidence="1">
    <location>
        <begin position="24"/>
        <end position="35"/>
    </location>
</feature>
<feature type="compositionally biased region" description="Low complexity" evidence="1">
    <location>
        <begin position="36"/>
        <end position="46"/>
    </location>
</feature>
<feature type="compositionally biased region" description="Low complexity" evidence="1">
    <location>
        <begin position="74"/>
        <end position="85"/>
    </location>
</feature>